<reference key="1">
    <citation type="journal article" date="1997" name="Nature">
        <title>The nucleotide sequence of Saccharomyces cerevisiae chromosome XV.</title>
        <authorList>
            <person name="Dujon B."/>
            <person name="Albermann K."/>
            <person name="Aldea M."/>
            <person name="Alexandraki D."/>
            <person name="Ansorge W."/>
            <person name="Arino J."/>
            <person name="Benes V."/>
            <person name="Bohn C."/>
            <person name="Bolotin-Fukuhara M."/>
            <person name="Bordonne R."/>
            <person name="Boyer J."/>
            <person name="Camasses A."/>
            <person name="Casamayor A."/>
            <person name="Casas C."/>
            <person name="Cheret G."/>
            <person name="Cziepluch C."/>
            <person name="Daignan-Fornier B."/>
            <person name="Dang V.-D."/>
            <person name="de Haan M."/>
            <person name="Delius H."/>
            <person name="Durand P."/>
            <person name="Fairhead C."/>
            <person name="Feldmann H."/>
            <person name="Gaillon L."/>
            <person name="Galisson F."/>
            <person name="Gamo F.-J."/>
            <person name="Gancedo C."/>
            <person name="Goffeau A."/>
            <person name="Goulding S.E."/>
            <person name="Grivell L.A."/>
            <person name="Habbig B."/>
            <person name="Hand N.J."/>
            <person name="Hani J."/>
            <person name="Hattenhorst U."/>
            <person name="Hebling U."/>
            <person name="Hernando Y."/>
            <person name="Herrero E."/>
            <person name="Heumann K."/>
            <person name="Hiesel R."/>
            <person name="Hilger F."/>
            <person name="Hofmann B."/>
            <person name="Hollenberg C.P."/>
            <person name="Hughes B."/>
            <person name="Jauniaux J.-C."/>
            <person name="Kalogeropoulos A."/>
            <person name="Katsoulou C."/>
            <person name="Kordes E."/>
            <person name="Lafuente M.J."/>
            <person name="Landt O."/>
            <person name="Louis E.J."/>
            <person name="Maarse A.C."/>
            <person name="Madania A."/>
            <person name="Mannhaupt G."/>
            <person name="Marck C."/>
            <person name="Martin R.P."/>
            <person name="Mewes H.-W."/>
            <person name="Michaux G."/>
            <person name="Paces V."/>
            <person name="Parle-McDermott A.G."/>
            <person name="Pearson B.M."/>
            <person name="Perrin A."/>
            <person name="Pettersson B."/>
            <person name="Poch O."/>
            <person name="Pohl T.M."/>
            <person name="Poirey R."/>
            <person name="Portetelle D."/>
            <person name="Pujol A."/>
            <person name="Purnelle B."/>
            <person name="Ramezani Rad M."/>
            <person name="Rechmann S."/>
            <person name="Schwager C."/>
            <person name="Schweizer M."/>
            <person name="Sor F."/>
            <person name="Sterky F."/>
            <person name="Tarassov I.A."/>
            <person name="Teodoru C."/>
            <person name="Tettelin H."/>
            <person name="Thierry A."/>
            <person name="Tobiasch E."/>
            <person name="Tzermia M."/>
            <person name="Uhlen M."/>
            <person name="Unseld M."/>
            <person name="Valens M."/>
            <person name="Vandenbol M."/>
            <person name="Vetter I."/>
            <person name="Vlcek C."/>
            <person name="Voet M."/>
            <person name="Volckaert G."/>
            <person name="Voss H."/>
            <person name="Wambutt R."/>
            <person name="Wedler H."/>
            <person name="Wiemann S."/>
            <person name="Winsor B."/>
            <person name="Wolfe K.H."/>
            <person name="Zollner A."/>
            <person name="Zumstein E."/>
            <person name="Kleine K."/>
        </authorList>
    </citation>
    <scope>NUCLEOTIDE SEQUENCE [LARGE SCALE GENOMIC DNA]</scope>
    <source>
        <strain>ATCC 204508 / S288c</strain>
    </source>
</reference>
<reference key="2">
    <citation type="journal article" date="2014" name="G3 (Bethesda)">
        <title>The reference genome sequence of Saccharomyces cerevisiae: Then and now.</title>
        <authorList>
            <person name="Engel S.R."/>
            <person name="Dietrich F.S."/>
            <person name="Fisk D.G."/>
            <person name="Binkley G."/>
            <person name="Balakrishnan R."/>
            <person name="Costanzo M.C."/>
            <person name="Dwight S.S."/>
            <person name="Hitz B.C."/>
            <person name="Karra K."/>
            <person name="Nash R.S."/>
            <person name="Weng S."/>
            <person name="Wong E.D."/>
            <person name="Lloyd P."/>
            <person name="Skrzypek M.S."/>
            <person name="Miyasato S.R."/>
            <person name="Simison M."/>
            <person name="Cherry J.M."/>
        </authorList>
    </citation>
    <scope>GENOME REANNOTATION</scope>
    <source>
        <strain>ATCC 204508 / S288c</strain>
    </source>
</reference>
<reference key="3">
    <citation type="journal article" date="2003" name="Genetics">
        <title>A Saccharomyces cerevisiae genome-wide mutant screen for altered sensitivity to K1 killer toxin.</title>
        <authorList>
            <person name="Page N."/>
            <person name="Gerard-Vincent M."/>
            <person name="Menard P."/>
            <person name="Beaulieu M."/>
            <person name="Azuma M."/>
            <person name="Dijkgraaf G.J.P."/>
            <person name="Li H."/>
            <person name="Marcoux J."/>
            <person name="Nguyen T."/>
            <person name="Dowse T."/>
            <person name="Sdicu A.-M."/>
            <person name="Bussey H."/>
        </authorList>
    </citation>
    <scope>FUNCTION</scope>
</reference>
<keyword id="KW-0325">Glycoprotein</keyword>
<keyword id="KW-0472">Membrane</keyword>
<keyword id="KW-1185">Reference proteome</keyword>
<keyword id="KW-0812">Transmembrane</keyword>
<keyword id="KW-1133">Transmembrane helix</keyword>
<accession>Q08559</accession>
<accession>D6W2N9</accession>
<organism>
    <name type="scientific">Saccharomyces cerevisiae (strain ATCC 204508 / S288c)</name>
    <name type="common">Baker's yeast</name>
    <dbReference type="NCBI Taxonomy" id="559292"/>
    <lineage>
        <taxon>Eukaryota</taxon>
        <taxon>Fungi</taxon>
        <taxon>Dikarya</taxon>
        <taxon>Ascomycota</taxon>
        <taxon>Saccharomycotina</taxon>
        <taxon>Saccharomycetes</taxon>
        <taxon>Saccharomycetales</taxon>
        <taxon>Saccharomycetaceae</taxon>
        <taxon>Saccharomyces</taxon>
    </lineage>
</organism>
<gene>
    <name type="primary">FYV12</name>
    <name type="ordered locus">YOR183W</name>
</gene>
<name>FYV12_YEAST</name>
<feature type="chain" id="PRO_0000239648" description="Protein FYV12">
    <location>
        <begin position="1"/>
        <end position="129"/>
    </location>
</feature>
<feature type="transmembrane region" description="Helical" evidence="1">
    <location>
        <begin position="109"/>
        <end position="128"/>
    </location>
</feature>
<feature type="glycosylation site" description="N-linked (GlcNAc...) asparagine" evidence="1">
    <location>
        <position position="91"/>
    </location>
</feature>
<protein>
    <recommendedName>
        <fullName>Protein FYV12</fullName>
    </recommendedName>
    <alternativeName>
        <fullName>Function required for yeast viability protein 12</fullName>
    </alternativeName>
</protein>
<sequence length="129" mass="14792">MRLLHHGEYGTKLIGGKCSIDGKLGHPCPLSRRRKKHLREKEMGPQYVRMYGPKRKAIIRTGNPDDGINLPDTGRGTLTAATIWSRAYHSNYSYLVRPKVVTLSKHRELMTTFLLYVLYVCIYISAFIK</sequence>
<dbReference type="EMBL" id="Z75091">
    <property type="protein sequence ID" value="CAA99392.1"/>
    <property type="molecule type" value="Genomic_DNA"/>
</dbReference>
<dbReference type="EMBL" id="BK006948">
    <property type="protein sequence ID" value="DAA10955.1"/>
    <property type="molecule type" value="Genomic_DNA"/>
</dbReference>
<dbReference type="PIR" id="S67075">
    <property type="entry name" value="S67075"/>
</dbReference>
<dbReference type="RefSeq" id="NP_014826.1">
    <property type="nucleotide sequence ID" value="NM_001183602.1"/>
</dbReference>
<dbReference type="BioGRID" id="34578">
    <property type="interactions" value="153"/>
</dbReference>
<dbReference type="FunCoup" id="Q08559">
    <property type="interactions" value="31"/>
</dbReference>
<dbReference type="STRING" id="4932.YOR183W"/>
<dbReference type="GlyCosmos" id="Q08559">
    <property type="glycosylation" value="1 site, No reported glycans"/>
</dbReference>
<dbReference type="GlyGen" id="Q08559">
    <property type="glycosylation" value="1 site"/>
</dbReference>
<dbReference type="PaxDb" id="4932-YOR183W"/>
<dbReference type="EnsemblFungi" id="YOR183W_mRNA">
    <property type="protein sequence ID" value="YOR183W"/>
    <property type="gene ID" value="YOR183W"/>
</dbReference>
<dbReference type="GeneID" id="854355"/>
<dbReference type="KEGG" id="sce:YOR183W"/>
<dbReference type="AGR" id="SGD:S000005709"/>
<dbReference type="SGD" id="S000005709">
    <property type="gene designation" value="FYV12"/>
</dbReference>
<dbReference type="VEuPathDB" id="FungiDB:YOR183W"/>
<dbReference type="HOGENOM" id="CLU_1961302_0_0_1"/>
<dbReference type="InParanoid" id="Q08559"/>
<dbReference type="OrthoDB" id="10318755at2759"/>
<dbReference type="BioCyc" id="YEAST:G3O-33694-MONOMER"/>
<dbReference type="BioGRID-ORCS" id="854355">
    <property type="hits" value="1 hit in 10 CRISPR screens"/>
</dbReference>
<dbReference type="PRO" id="PR:Q08559"/>
<dbReference type="Proteomes" id="UP000002311">
    <property type="component" value="Chromosome XV"/>
</dbReference>
<dbReference type="RNAct" id="Q08559">
    <property type="molecule type" value="protein"/>
</dbReference>
<dbReference type="GO" id="GO:0016020">
    <property type="term" value="C:membrane"/>
    <property type="evidence" value="ECO:0007669"/>
    <property type="project" value="UniProtKB-SubCell"/>
</dbReference>
<comment type="function">
    <text evidence="2">Involved in K1 killer toxin resistance.</text>
</comment>
<comment type="subcellular location">
    <subcellularLocation>
        <location evidence="3">Membrane</location>
        <topology evidence="3">Single-pass membrane protein</topology>
    </subcellularLocation>
</comment>
<evidence type="ECO:0000255" key="1"/>
<evidence type="ECO:0000269" key="2">
    <source>
    </source>
</evidence>
<evidence type="ECO:0000305" key="3"/>
<proteinExistence type="predicted"/>